<gene>
    <name evidence="1" type="primary">hslU</name>
    <name type="ordered locus">Csac_1252</name>
</gene>
<protein>
    <recommendedName>
        <fullName evidence="1">ATP-dependent protease ATPase subunit HslU</fullName>
    </recommendedName>
    <alternativeName>
        <fullName evidence="1">Unfoldase HslU</fullName>
    </alternativeName>
</protein>
<evidence type="ECO:0000255" key="1">
    <source>
        <dbReference type="HAMAP-Rule" id="MF_00249"/>
    </source>
</evidence>
<feature type="chain" id="PRO_1000012724" description="ATP-dependent protease ATPase subunit HslU">
    <location>
        <begin position="1"/>
        <end position="465"/>
    </location>
</feature>
<feature type="binding site" evidence="1">
    <location>
        <position position="18"/>
    </location>
    <ligand>
        <name>ATP</name>
        <dbReference type="ChEBI" id="CHEBI:30616"/>
    </ligand>
</feature>
<feature type="binding site" evidence="1">
    <location>
        <begin position="60"/>
        <end position="65"/>
    </location>
    <ligand>
        <name>ATP</name>
        <dbReference type="ChEBI" id="CHEBI:30616"/>
    </ligand>
</feature>
<feature type="binding site" evidence="1">
    <location>
        <position position="277"/>
    </location>
    <ligand>
        <name>ATP</name>
        <dbReference type="ChEBI" id="CHEBI:30616"/>
    </ligand>
</feature>
<feature type="binding site" evidence="1">
    <location>
        <position position="342"/>
    </location>
    <ligand>
        <name>ATP</name>
        <dbReference type="ChEBI" id="CHEBI:30616"/>
    </ligand>
</feature>
<feature type="binding site" evidence="1">
    <location>
        <position position="414"/>
    </location>
    <ligand>
        <name>ATP</name>
        <dbReference type="ChEBI" id="CHEBI:30616"/>
    </ligand>
</feature>
<keyword id="KW-0067">ATP-binding</keyword>
<keyword id="KW-0143">Chaperone</keyword>
<keyword id="KW-0963">Cytoplasm</keyword>
<keyword id="KW-0547">Nucleotide-binding</keyword>
<keyword id="KW-0346">Stress response</keyword>
<dbReference type="EMBL" id="CP000679">
    <property type="protein sequence ID" value="ABP66855.1"/>
    <property type="molecule type" value="Genomic_DNA"/>
</dbReference>
<dbReference type="RefSeq" id="WP_011916790.1">
    <property type="nucleotide sequence ID" value="NC_009437.1"/>
</dbReference>
<dbReference type="SMR" id="A4XIX0"/>
<dbReference type="STRING" id="351627.Csac_1252"/>
<dbReference type="KEGG" id="csc:Csac_1252"/>
<dbReference type="eggNOG" id="COG1220">
    <property type="taxonomic scope" value="Bacteria"/>
</dbReference>
<dbReference type="HOGENOM" id="CLU_033123_0_0_9"/>
<dbReference type="OrthoDB" id="9804062at2"/>
<dbReference type="Proteomes" id="UP000000256">
    <property type="component" value="Chromosome"/>
</dbReference>
<dbReference type="GO" id="GO:0009376">
    <property type="term" value="C:HslUV protease complex"/>
    <property type="evidence" value="ECO:0007669"/>
    <property type="project" value="UniProtKB-UniRule"/>
</dbReference>
<dbReference type="GO" id="GO:0005524">
    <property type="term" value="F:ATP binding"/>
    <property type="evidence" value="ECO:0007669"/>
    <property type="project" value="UniProtKB-UniRule"/>
</dbReference>
<dbReference type="GO" id="GO:0016887">
    <property type="term" value="F:ATP hydrolysis activity"/>
    <property type="evidence" value="ECO:0007669"/>
    <property type="project" value="InterPro"/>
</dbReference>
<dbReference type="GO" id="GO:0008233">
    <property type="term" value="F:peptidase activity"/>
    <property type="evidence" value="ECO:0007669"/>
    <property type="project" value="InterPro"/>
</dbReference>
<dbReference type="GO" id="GO:0036402">
    <property type="term" value="F:proteasome-activating activity"/>
    <property type="evidence" value="ECO:0007669"/>
    <property type="project" value="UniProtKB-UniRule"/>
</dbReference>
<dbReference type="GO" id="GO:0043335">
    <property type="term" value="P:protein unfolding"/>
    <property type="evidence" value="ECO:0007669"/>
    <property type="project" value="UniProtKB-UniRule"/>
</dbReference>
<dbReference type="GO" id="GO:0051603">
    <property type="term" value="P:proteolysis involved in protein catabolic process"/>
    <property type="evidence" value="ECO:0007669"/>
    <property type="project" value="TreeGrafter"/>
</dbReference>
<dbReference type="CDD" id="cd19498">
    <property type="entry name" value="RecA-like_HslU"/>
    <property type="match status" value="1"/>
</dbReference>
<dbReference type="FunFam" id="3.40.50.300:FF:000213">
    <property type="entry name" value="ATP-dependent protease ATPase subunit HslU"/>
    <property type="match status" value="1"/>
</dbReference>
<dbReference type="FunFam" id="3.40.50.300:FF:000220">
    <property type="entry name" value="ATP-dependent protease ATPase subunit HslU"/>
    <property type="match status" value="1"/>
</dbReference>
<dbReference type="Gene3D" id="1.10.8.60">
    <property type="match status" value="1"/>
</dbReference>
<dbReference type="Gene3D" id="1.10.8.10">
    <property type="entry name" value="DNA helicase RuvA subunit, C-terminal domain"/>
    <property type="match status" value="2"/>
</dbReference>
<dbReference type="Gene3D" id="3.40.50.300">
    <property type="entry name" value="P-loop containing nucleotide triphosphate hydrolases"/>
    <property type="match status" value="2"/>
</dbReference>
<dbReference type="HAMAP" id="MF_00249">
    <property type="entry name" value="HslU"/>
    <property type="match status" value="1"/>
</dbReference>
<dbReference type="InterPro" id="IPR003593">
    <property type="entry name" value="AAA+_ATPase"/>
</dbReference>
<dbReference type="InterPro" id="IPR050052">
    <property type="entry name" value="ATP-dep_Clp_protease_ClpX"/>
</dbReference>
<dbReference type="InterPro" id="IPR003959">
    <property type="entry name" value="ATPase_AAA_core"/>
</dbReference>
<dbReference type="InterPro" id="IPR011704">
    <property type="entry name" value="ATPase_dyneun-rel_AAA"/>
</dbReference>
<dbReference type="InterPro" id="IPR019489">
    <property type="entry name" value="Clp_ATPase_C"/>
</dbReference>
<dbReference type="InterPro" id="IPR004491">
    <property type="entry name" value="HslU"/>
</dbReference>
<dbReference type="InterPro" id="IPR027417">
    <property type="entry name" value="P-loop_NTPase"/>
</dbReference>
<dbReference type="NCBIfam" id="TIGR00390">
    <property type="entry name" value="hslU"/>
    <property type="match status" value="1"/>
</dbReference>
<dbReference type="NCBIfam" id="NF003544">
    <property type="entry name" value="PRK05201.1"/>
    <property type="match status" value="1"/>
</dbReference>
<dbReference type="PANTHER" id="PTHR48102">
    <property type="entry name" value="ATP-DEPENDENT CLP PROTEASE ATP-BINDING SUBUNIT CLPX-LIKE, MITOCHONDRIAL-RELATED"/>
    <property type="match status" value="1"/>
</dbReference>
<dbReference type="PANTHER" id="PTHR48102:SF3">
    <property type="entry name" value="ATP-DEPENDENT PROTEASE ATPASE SUBUNIT HSLU"/>
    <property type="match status" value="1"/>
</dbReference>
<dbReference type="Pfam" id="PF07724">
    <property type="entry name" value="AAA_2"/>
    <property type="match status" value="1"/>
</dbReference>
<dbReference type="Pfam" id="PF07728">
    <property type="entry name" value="AAA_5"/>
    <property type="match status" value="1"/>
</dbReference>
<dbReference type="Pfam" id="PF10431">
    <property type="entry name" value="ClpB_D2-small"/>
    <property type="match status" value="1"/>
</dbReference>
<dbReference type="SMART" id="SM00382">
    <property type="entry name" value="AAA"/>
    <property type="match status" value="1"/>
</dbReference>
<dbReference type="SMART" id="SM01086">
    <property type="entry name" value="ClpB_D2-small"/>
    <property type="match status" value="1"/>
</dbReference>
<dbReference type="SUPFAM" id="SSF52540">
    <property type="entry name" value="P-loop containing nucleoside triphosphate hydrolases"/>
    <property type="match status" value="1"/>
</dbReference>
<comment type="function">
    <text evidence="1">ATPase subunit of a proteasome-like degradation complex; this subunit has chaperone activity. The binding of ATP and its subsequent hydrolysis by HslU are essential for unfolding of protein substrates subsequently hydrolyzed by HslV. HslU recognizes the N-terminal part of its protein substrates and unfolds these before they are guided to HslV for hydrolysis.</text>
</comment>
<comment type="subunit">
    <text evidence="1">A double ring-shaped homohexamer of HslV is capped on each side by a ring-shaped HslU homohexamer. The assembly of the HslU/HslV complex is dependent on binding of ATP.</text>
</comment>
<comment type="subcellular location">
    <subcellularLocation>
        <location evidence="1">Cytoplasm</location>
    </subcellularLocation>
</comment>
<comment type="similarity">
    <text evidence="1">Belongs to the ClpX chaperone family. HslU subfamily.</text>
</comment>
<name>HSLU_CALS8</name>
<reference key="1">
    <citation type="submission" date="2007-04" db="EMBL/GenBank/DDBJ databases">
        <title>Genome sequence of the thermophilic hydrogen-producing bacterium Caldicellulosiruptor saccharolyticus DSM 8903.</title>
        <authorList>
            <person name="Copeland A."/>
            <person name="Lucas S."/>
            <person name="Lapidus A."/>
            <person name="Barry K."/>
            <person name="Detter J.C."/>
            <person name="Glavina del Rio T."/>
            <person name="Hammon N."/>
            <person name="Israni S."/>
            <person name="Dalin E."/>
            <person name="Tice H."/>
            <person name="Pitluck S."/>
            <person name="Kiss H."/>
            <person name="Brettin T."/>
            <person name="Bruce D."/>
            <person name="Han C."/>
            <person name="Schmutz J."/>
            <person name="Larimer F."/>
            <person name="Land M."/>
            <person name="Hauser L."/>
            <person name="Kyrpides N."/>
            <person name="Lykidis A."/>
            <person name="van de Werken H.J.G."/>
            <person name="Verhaart M.R.A."/>
            <person name="VanFossen A.L."/>
            <person name="Lewis D.L."/>
            <person name="Nichols J.D."/>
            <person name="Goorissen H.P."/>
            <person name="van Niel E.W.J."/>
            <person name="Stams F.J.M."/>
            <person name="Willquist K.U."/>
            <person name="Ward D.E."/>
            <person name="van der Oost J."/>
            <person name="Kelly R.M."/>
            <person name="Kengen S.M.W."/>
            <person name="Richardson P."/>
        </authorList>
    </citation>
    <scope>NUCLEOTIDE SEQUENCE [LARGE SCALE GENOMIC DNA]</scope>
    <source>
        <strain>ATCC 43494 / DSM 8903 / Tp8T 6331</strain>
    </source>
</reference>
<proteinExistence type="inferred from homology"/>
<accession>A4XIX0</accession>
<organism>
    <name type="scientific">Caldicellulosiruptor saccharolyticus (strain ATCC 43494 / DSM 8903 / Tp8T 6331)</name>
    <dbReference type="NCBI Taxonomy" id="351627"/>
    <lineage>
        <taxon>Bacteria</taxon>
        <taxon>Bacillati</taxon>
        <taxon>Bacillota</taxon>
        <taxon>Bacillota incertae sedis</taxon>
        <taxon>Caldicellulosiruptorales</taxon>
        <taxon>Caldicellulosiruptoraceae</taxon>
        <taxon>Caldicellulosiruptor</taxon>
    </lineage>
</organism>
<sequence>MNELTPQEIVRELDKYIVGQERAKRCVAIALRNRYRRAKLPKELQDEITPKNILMVGPTGVGKTEIARRLAKLVNAPFVKVEATKFTEVGYVGRDVDSMVRDLVENAISLVKSEYMEKMKERAKALVEDRILEILIPEPHARKAGFKNPFEALFGAPSQEPEQTYQTTDDYIRTQREILREKLRSGELEDKVIEVEVEDTVKPPFEMIMGTISDEMGISFQDVFGSLFPKKKKKKKMTIREAREVLEQEEYNKLIDMDEVIKEAIHRAEQHGIIFIDEIDKIAGRGSGVGPDVSREGVQRDILPIVEGSTVMTKYGPVKTDHILFIAAGAFHVAKVSDLIPELQGRFPVVVELHPLTEEDFKKILTQPKNAITKQYIELMKTEGVNITFTDDAIEAIAKVAVKINEQSENIGARRLHTVVEKIMEDISFEYANVEKPIDVVIDKDYVYSKVSDMIKDKDLNRFII</sequence>